<organism>
    <name type="scientific">Streptococcus pyogenes serotype M2 (strain MGAS10270)</name>
    <dbReference type="NCBI Taxonomy" id="370552"/>
    <lineage>
        <taxon>Bacteria</taxon>
        <taxon>Bacillati</taxon>
        <taxon>Bacillota</taxon>
        <taxon>Bacilli</taxon>
        <taxon>Lactobacillales</taxon>
        <taxon>Streptococcaceae</taxon>
        <taxon>Streptococcus</taxon>
    </lineage>
</organism>
<proteinExistence type="inferred from homology"/>
<name>RL20_STRPD</name>
<keyword id="KW-0687">Ribonucleoprotein</keyword>
<keyword id="KW-0689">Ribosomal protein</keyword>
<keyword id="KW-0694">RNA-binding</keyword>
<keyword id="KW-0699">rRNA-binding</keyword>
<sequence>MARVKGGVVSRKRRKRILKLAKGYYGAKHILFRTAKEQVMNSYYYAYRDRRQKKRDFRKLWITRINAAARMNGLSYSQLMHGLKLAEIEVNRKMLADLAVADAAAFTALADAAKAKLGK</sequence>
<reference key="1">
    <citation type="journal article" date="2006" name="Proc. Natl. Acad. Sci. U.S.A.">
        <title>Molecular genetic anatomy of inter- and intraserotype variation in the human bacterial pathogen group A Streptococcus.</title>
        <authorList>
            <person name="Beres S.B."/>
            <person name="Richter E.W."/>
            <person name="Nagiec M.J."/>
            <person name="Sumby P."/>
            <person name="Porcella S.F."/>
            <person name="DeLeo F.R."/>
            <person name="Musser J.M."/>
        </authorList>
    </citation>
    <scope>NUCLEOTIDE SEQUENCE [LARGE SCALE GENOMIC DNA]</scope>
    <source>
        <strain>MGAS10270</strain>
    </source>
</reference>
<feature type="chain" id="PRO_1000049085" description="Large ribosomal subunit protein bL20">
    <location>
        <begin position="1"/>
        <end position="119"/>
    </location>
</feature>
<accession>Q1JHJ5</accession>
<protein>
    <recommendedName>
        <fullName evidence="1">Large ribosomal subunit protein bL20</fullName>
    </recommendedName>
    <alternativeName>
        <fullName evidence="2">50S ribosomal protein L20</fullName>
    </alternativeName>
</protein>
<dbReference type="EMBL" id="CP000260">
    <property type="protein sequence ID" value="ABF33741.1"/>
    <property type="molecule type" value="Genomic_DNA"/>
</dbReference>
<dbReference type="RefSeq" id="WP_002985149.1">
    <property type="nucleotide sequence ID" value="NZ_CVUH01000002.1"/>
</dbReference>
<dbReference type="SMR" id="Q1JHJ5"/>
<dbReference type="GeneID" id="69901075"/>
<dbReference type="KEGG" id="sph:MGAS10270_Spy0676"/>
<dbReference type="HOGENOM" id="CLU_123265_0_1_9"/>
<dbReference type="Proteomes" id="UP000002436">
    <property type="component" value="Chromosome"/>
</dbReference>
<dbReference type="GO" id="GO:1990904">
    <property type="term" value="C:ribonucleoprotein complex"/>
    <property type="evidence" value="ECO:0007669"/>
    <property type="project" value="UniProtKB-KW"/>
</dbReference>
<dbReference type="GO" id="GO:0005840">
    <property type="term" value="C:ribosome"/>
    <property type="evidence" value="ECO:0007669"/>
    <property type="project" value="UniProtKB-KW"/>
</dbReference>
<dbReference type="GO" id="GO:0019843">
    <property type="term" value="F:rRNA binding"/>
    <property type="evidence" value="ECO:0007669"/>
    <property type="project" value="UniProtKB-UniRule"/>
</dbReference>
<dbReference type="GO" id="GO:0003735">
    <property type="term" value="F:structural constituent of ribosome"/>
    <property type="evidence" value="ECO:0007669"/>
    <property type="project" value="InterPro"/>
</dbReference>
<dbReference type="GO" id="GO:0000027">
    <property type="term" value="P:ribosomal large subunit assembly"/>
    <property type="evidence" value="ECO:0007669"/>
    <property type="project" value="UniProtKB-UniRule"/>
</dbReference>
<dbReference type="GO" id="GO:0006412">
    <property type="term" value="P:translation"/>
    <property type="evidence" value="ECO:0007669"/>
    <property type="project" value="InterPro"/>
</dbReference>
<dbReference type="CDD" id="cd07026">
    <property type="entry name" value="Ribosomal_L20"/>
    <property type="match status" value="1"/>
</dbReference>
<dbReference type="FunFam" id="1.10.1900.20:FF:000001">
    <property type="entry name" value="50S ribosomal protein L20"/>
    <property type="match status" value="1"/>
</dbReference>
<dbReference type="Gene3D" id="6.10.160.10">
    <property type="match status" value="1"/>
</dbReference>
<dbReference type="Gene3D" id="1.10.1900.20">
    <property type="entry name" value="Ribosomal protein L20"/>
    <property type="match status" value="1"/>
</dbReference>
<dbReference type="HAMAP" id="MF_00382">
    <property type="entry name" value="Ribosomal_bL20"/>
    <property type="match status" value="1"/>
</dbReference>
<dbReference type="InterPro" id="IPR005813">
    <property type="entry name" value="Ribosomal_bL20"/>
</dbReference>
<dbReference type="InterPro" id="IPR049946">
    <property type="entry name" value="RIBOSOMAL_L20_CS"/>
</dbReference>
<dbReference type="InterPro" id="IPR035566">
    <property type="entry name" value="Ribosomal_protein_bL20_C"/>
</dbReference>
<dbReference type="NCBIfam" id="TIGR01032">
    <property type="entry name" value="rplT_bact"/>
    <property type="match status" value="1"/>
</dbReference>
<dbReference type="PANTHER" id="PTHR10986">
    <property type="entry name" value="39S RIBOSOMAL PROTEIN L20"/>
    <property type="match status" value="1"/>
</dbReference>
<dbReference type="Pfam" id="PF00453">
    <property type="entry name" value="Ribosomal_L20"/>
    <property type="match status" value="1"/>
</dbReference>
<dbReference type="PRINTS" id="PR00062">
    <property type="entry name" value="RIBOSOMALL20"/>
</dbReference>
<dbReference type="SUPFAM" id="SSF74731">
    <property type="entry name" value="Ribosomal protein L20"/>
    <property type="match status" value="1"/>
</dbReference>
<dbReference type="PROSITE" id="PS00937">
    <property type="entry name" value="RIBOSOMAL_L20"/>
    <property type="match status" value="1"/>
</dbReference>
<gene>
    <name evidence="1" type="primary">rplT</name>
    <name type="ordered locus">MGAS10270_Spy0676</name>
</gene>
<evidence type="ECO:0000255" key="1">
    <source>
        <dbReference type="HAMAP-Rule" id="MF_00382"/>
    </source>
</evidence>
<evidence type="ECO:0000305" key="2"/>
<comment type="function">
    <text evidence="1">Binds directly to 23S ribosomal RNA and is necessary for the in vitro assembly process of the 50S ribosomal subunit. It is not involved in the protein synthesizing functions of that subunit.</text>
</comment>
<comment type="similarity">
    <text evidence="1">Belongs to the bacterial ribosomal protein bL20 family.</text>
</comment>